<keyword id="KW-0227">DNA damage</keyword>
<keyword id="KW-0234">DNA repair</keyword>
<keyword id="KW-0235">DNA replication</keyword>
<keyword id="KW-0436">Ligase</keyword>
<keyword id="KW-0460">Magnesium</keyword>
<keyword id="KW-0464">Manganese</keyword>
<keyword id="KW-0479">Metal-binding</keyword>
<keyword id="KW-0520">NAD</keyword>
<keyword id="KW-1185">Reference proteome</keyword>
<keyword id="KW-0862">Zinc</keyword>
<evidence type="ECO:0000255" key="1">
    <source>
        <dbReference type="HAMAP-Rule" id="MF_01588"/>
    </source>
</evidence>
<comment type="function">
    <text evidence="1">DNA ligase that catalyzes the formation of phosphodiester linkages between 5'-phosphoryl and 3'-hydroxyl groups in double-stranded DNA using NAD as a coenzyme and as the energy source for the reaction. It is essential for DNA replication and repair of damaged DNA.</text>
</comment>
<comment type="catalytic activity">
    <reaction evidence="1">
        <text>NAD(+) + (deoxyribonucleotide)n-3'-hydroxyl + 5'-phospho-(deoxyribonucleotide)m = (deoxyribonucleotide)n+m + AMP + beta-nicotinamide D-nucleotide.</text>
        <dbReference type="EC" id="6.5.1.2"/>
    </reaction>
</comment>
<comment type="cofactor">
    <cofactor evidence="1">
        <name>Mg(2+)</name>
        <dbReference type="ChEBI" id="CHEBI:18420"/>
    </cofactor>
    <cofactor evidence="1">
        <name>Mn(2+)</name>
        <dbReference type="ChEBI" id="CHEBI:29035"/>
    </cofactor>
</comment>
<comment type="similarity">
    <text evidence="1">Belongs to the NAD-dependent DNA ligase family. LigA subfamily.</text>
</comment>
<sequence length="707" mass="77203">MSTLDLFASPTPAPMPPASVIERIAALRAELDLHAHRYYVLDEPSIPDAEYDRLFKELQALEAAHPELLTPDSPTQRVGGKPLGQFASVRHRIPMLSIRTETDTEATGARNFDTRVRKELGLKESDPPVEYVAELKFDGLAMSLRYENGVLVQAATRGDGEVGEDVTQNIRTIRQIPLRLPADAPPVMEVRGEVYMRRDEFEALNERQREKIAKGAKGEKTFVNPRNAAAGGVRQLDPAFAAERRLSFFAYGVGEITPPEEGGPVFETHFELLQTLKSWCFPVAAQTRLAYGAPELIAFHEAIGRQRDQLPYDIDGVVYKVNSLALQRKMGFVSREPRWAVAHKYPAQEQLTTVLAIDIQVGRTGKLTPVAKLAPVFVGGVTVTNATLHNEDEARRKDVRVGDTVIVRRAGDVIPEVVSVLLDKRVQDAPQFSMPRQCPVCGSDAVREEGEADYRCTGGLFCAAQRKEAILHYAHKRAVEIEGLGDKLVEQLVDTGVIRTLPDLYRLGFTSLASLDRMAEKSASNLVAALEKSKQTTLPRFVFGLGIRHVGEATAKALARHFGQLDSIMDASEEQLLEVADVGPIVAKSIRTFFEQPHNREVVEQLRACGVTWEEGAPAAVAPKPLSGKTFVITGTLPGLSRDDAKDRIEAAGGKVAGSVSKKTDYVVAGLDAGSKLVKAEALGVAVIDEATLLALLDSPPDERIPA</sequence>
<dbReference type="EC" id="6.5.1.2" evidence="1"/>
<dbReference type="EMBL" id="CP000529">
    <property type="protein sequence ID" value="ABM37126.1"/>
    <property type="molecule type" value="Genomic_DNA"/>
</dbReference>
<dbReference type="RefSeq" id="WP_011801207.1">
    <property type="nucleotide sequence ID" value="NC_008781.1"/>
</dbReference>
<dbReference type="SMR" id="A1VN98"/>
<dbReference type="STRING" id="365044.Pnap_1816"/>
<dbReference type="KEGG" id="pna:Pnap_1816"/>
<dbReference type="eggNOG" id="COG0272">
    <property type="taxonomic scope" value="Bacteria"/>
</dbReference>
<dbReference type="HOGENOM" id="CLU_007764_2_1_4"/>
<dbReference type="OrthoDB" id="9759736at2"/>
<dbReference type="Proteomes" id="UP000000644">
    <property type="component" value="Chromosome"/>
</dbReference>
<dbReference type="GO" id="GO:0005829">
    <property type="term" value="C:cytosol"/>
    <property type="evidence" value="ECO:0007669"/>
    <property type="project" value="TreeGrafter"/>
</dbReference>
<dbReference type="GO" id="GO:0003677">
    <property type="term" value="F:DNA binding"/>
    <property type="evidence" value="ECO:0007669"/>
    <property type="project" value="InterPro"/>
</dbReference>
<dbReference type="GO" id="GO:0003911">
    <property type="term" value="F:DNA ligase (NAD+) activity"/>
    <property type="evidence" value="ECO:0007669"/>
    <property type="project" value="UniProtKB-UniRule"/>
</dbReference>
<dbReference type="GO" id="GO:0046872">
    <property type="term" value="F:metal ion binding"/>
    <property type="evidence" value="ECO:0007669"/>
    <property type="project" value="UniProtKB-KW"/>
</dbReference>
<dbReference type="GO" id="GO:0006281">
    <property type="term" value="P:DNA repair"/>
    <property type="evidence" value="ECO:0007669"/>
    <property type="project" value="UniProtKB-KW"/>
</dbReference>
<dbReference type="GO" id="GO:0006260">
    <property type="term" value="P:DNA replication"/>
    <property type="evidence" value="ECO:0007669"/>
    <property type="project" value="UniProtKB-KW"/>
</dbReference>
<dbReference type="CDD" id="cd17748">
    <property type="entry name" value="BRCT_DNA_ligase_like"/>
    <property type="match status" value="1"/>
</dbReference>
<dbReference type="CDD" id="cd00114">
    <property type="entry name" value="LIGANc"/>
    <property type="match status" value="1"/>
</dbReference>
<dbReference type="FunFam" id="1.10.150.20:FF:000006">
    <property type="entry name" value="DNA ligase"/>
    <property type="match status" value="1"/>
</dbReference>
<dbReference type="FunFam" id="1.10.150.20:FF:000007">
    <property type="entry name" value="DNA ligase"/>
    <property type="match status" value="1"/>
</dbReference>
<dbReference type="FunFam" id="1.10.287.610:FF:000002">
    <property type="entry name" value="DNA ligase"/>
    <property type="match status" value="1"/>
</dbReference>
<dbReference type="FunFam" id="2.40.50.140:FF:000012">
    <property type="entry name" value="DNA ligase"/>
    <property type="match status" value="1"/>
</dbReference>
<dbReference type="FunFam" id="3.30.470.30:FF:000001">
    <property type="entry name" value="DNA ligase"/>
    <property type="match status" value="1"/>
</dbReference>
<dbReference type="FunFam" id="3.40.50.10190:FF:000054">
    <property type="entry name" value="DNA ligase"/>
    <property type="match status" value="1"/>
</dbReference>
<dbReference type="Gene3D" id="6.20.10.30">
    <property type="match status" value="1"/>
</dbReference>
<dbReference type="Gene3D" id="1.10.150.20">
    <property type="entry name" value="5' to 3' exonuclease, C-terminal subdomain"/>
    <property type="match status" value="2"/>
</dbReference>
<dbReference type="Gene3D" id="3.40.50.10190">
    <property type="entry name" value="BRCT domain"/>
    <property type="match status" value="1"/>
</dbReference>
<dbReference type="Gene3D" id="3.30.470.30">
    <property type="entry name" value="DNA ligase/mRNA capping enzyme"/>
    <property type="match status" value="1"/>
</dbReference>
<dbReference type="Gene3D" id="1.10.287.610">
    <property type="entry name" value="Helix hairpin bin"/>
    <property type="match status" value="1"/>
</dbReference>
<dbReference type="Gene3D" id="2.40.50.140">
    <property type="entry name" value="Nucleic acid-binding proteins"/>
    <property type="match status" value="1"/>
</dbReference>
<dbReference type="HAMAP" id="MF_01588">
    <property type="entry name" value="DNA_ligase_A"/>
    <property type="match status" value="1"/>
</dbReference>
<dbReference type="InterPro" id="IPR001357">
    <property type="entry name" value="BRCT_dom"/>
</dbReference>
<dbReference type="InterPro" id="IPR036420">
    <property type="entry name" value="BRCT_dom_sf"/>
</dbReference>
<dbReference type="InterPro" id="IPR041663">
    <property type="entry name" value="DisA/LigA_HHH"/>
</dbReference>
<dbReference type="InterPro" id="IPR001679">
    <property type="entry name" value="DNA_ligase"/>
</dbReference>
<dbReference type="InterPro" id="IPR018239">
    <property type="entry name" value="DNA_ligase_AS"/>
</dbReference>
<dbReference type="InterPro" id="IPR033136">
    <property type="entry name" value="DNA_ligase_CS"/>
</dbReference>
<dbReference type="InterPro" id="IPR013839">
    <property type="entry name" value="DNAligase_adenylation"/>
</dbReference>
<dbReference type="InterPro" id="IPR013840">
    <property type="entry name" value="DNAligase_N"/>
</dbReference>
<dbReference type="InterPro" id="IPR003583">
    <property type="entry name" value="Hlx-hairpin-Hlx_DNA-bd_motif"/>
</dbReference>
<dbReference type="InterPro" id="IPR012340">
    <property type="entry name" value="NA-bd_OB-fold"/>
</dbReference>
<dbReference type="InterPro" id="IPR004150">
    <property type="entry name" value="NAD_DNA_ligase_OB"/>
</dbReference>
<dbReference type="InterPro" id="IPR010994">
    <property type="entry name" value="RuvA_2-like"/>
</dbReference>
<dbReference type="InterPro" id="IPR004149">
    <property type="entry name" value="Znf_DNAligase_C4"/>
</dbReference>
<dbReference type="NCBIfam" id="TIGR00575">
    <property type="entry name" value="dnlj"/>
    <property type="match status" value="1"/>
</dbReference>
<dbReference type="NCBIfam" id="NF005932">
    <property type="entry name" value="PRK07956.1"/>
    <property type="match status" value="1"/>
</dbReference>
<dbReference type="PANTHER" id="PTHR23389">
    <property type="entry name" value="CHROMOSOME TRANSMISSION FIDELITY FACTOR 18"/>
    <property type="match status" value="1"/>
</dbReference>
<dbReference type="PANTHER" id="PTHR23389:SF9">
    <property type="entry name" value="DNA LIGASE"/>
    <property type="match status" value="1"/>
</dbReference>
<dbReference type="Pfam" id="PF00533">
    <property type="entry name" value="BRCT"/>
    <property type="match status" value="1"/>
</dbReference>
<dbReference type="Pfam" id="PF01653">
    <property type="entry name" value="DNA_ligase_aden"/>
    <property type="match status" value="1"/>
</dbReference>
<dbReference type="Pfam" id="PF03120">
    <property type="entry name" value="DNA_ligase_OB"/>
    <property type="match status" value="1"/>
</dbReference>
<dbReference type="Pfam" id="PF03119">
    <property type="entry name" value="DNA_ligase_ZBD"/>
    <property type="match status" value="1"/>
</dbReference>
<dbReference type="Pfam" id="PF12826">
    <property type="entry name" value="HHH_2"/>
    <property type="match status" value="1"/>
</dbReference>
<dbReference type="Pfam" id="PF14520">
    <property type="entry name" value="HHH_5"/>
    <property type="match status" value="1"/>
</dbReference>
<dbReference type="Pfam" id="PF22745">
    <property type="entry name" value="Nlig-Ia"/>
    <property type="match status" value="1"/>
</dbReference>
<dbReference type="PIRSF" id="PIRSF001604">
    <property type="entry name" value="LigA"/>
    <property type="match status" value="1"/>
</dbReference>
<dbReference type="SMART" id="SM00292">
    <property type="entry name" value="BRCT"/>
    <property type="match status" value="1"/>
</dbReference>
<dbReference type="SMART" id="SM00278">
    <property type="entry name" value="HhH1"/>
    <property type="match status" value="4"/>
</dbReference>
<dbReference type="SMART" id="SM00532">
    <property type="entry name" value="LIGANc"/>
    <property type="match status" value="1"/>
</dbReference>
<dbReference type="SUPFAM" id="SSF52113">
    <property type="entry name" value="BRCT domain"/>
    <property type="match status" value="1"/>
</dbReference>
<dbReference type="SUPFAM" id="SSF56091">
    <property type="entry name" value="DNA ligase/mRNA capping enzyme, catalytic domain"/>
    <property type="match status" value="1"/>
</dbReference>
<dbReference type="SUPFAM" id="SSF50249">
    <property type="entry name" value="Nucleic acid-binding proteins"/>
    <property type="match status" value="1"/>
</dbReference>
<dbReference type="SUPFAM" id="SSF47781">
    <property type="entry name" value="RuvA domain 2-like"/>
    <property type="match status" value="1"/>
</dbReference>
<dbReference type="PROSITE" id="PS50172">
    <property type="entry name" value="BRCT"/>
    <property type="match status" value="1"/>
</dbReference>
<dbReference type="PROSITE" id="PS01055">
    <property type="entry name" value="DNA_LIGASE_N1"/>
    <property type="match status" value="1"/>
</dbReference>
<dbReference type="PROSITE" id="PS01056">
    <property type="entry name" value="DNA_LIGASE_N2"/>
    <property type="match status" value="1"/>
</dbReference>
<proteinExistence type="inferred from homology"/>
<organism>
    <name type="scientific">Polaromonas naphthalenivorans (strain CJ2)</name>
    <dbReference type="NCBI Taxonomy" id="365044"/>
    <lineage>
        <taxon>Bacteria</taxon>
        <taxon>Pseudomonadati</taxon>
        <taxon>Pseudomonadota</taxon>
        <taxon>Betaproteobacteria</taxon>
        <taxon>Burkholderiales</taxon>
        <taxon>Comamonadaceae</taxon>
        <taxon>Polaromonas</taxon>
    </lineage>
</organism>
<name>DNLJ_POLNA</name>
<reference key="1">
    <citation type="journal article" date="2009" name="Environ. Microbiol.">
        <title>The genome of Polaromonas naphthalenivorans strain CJ2, isolated from coal tar-contaminated sediment, reveals physiological and metabolic versatility and evolution through extensive horizontal gene transfer.</title>
        <authorList>
            <person name="Yagi J.M."/>
            <person name="Sims D."/>
            <person name="Brettin T."/>
            <person name="Bruce D."/>
            <person name="Madsen E.L."/>
        </authorList>
    </citation>
    <scope>NUCLEOTIDE SEQUENCE [LARGE SCALE GENOMIC DNA]</scope>
    <source>
        <strain>CJ2</strain>
    </source>
</reference>
<feature type="chain" id="PRO_0000313361" description="DNA ligase">
    <location>
        <begin position="1"/>
        <end position="707"/>
    </location>
</feature>
<feature type="domain" description="BRCT" evidence="1">
    <location>
        <begin position="621"/>
        <end position="707"/>
    </location>
</feature>
<feature type="active site" description="N6-AMP-lysine intermediate" evidence="1">
    <location>
        <position position="136"/>
    </location>
</feature>
<feature type="binding site" evidence="1">
    <location>
        <begin position="48"/>
        <end position="52"/>
    </location>
    <ligand>
        <name>NAD(+)</name>
        <dbReference type="ChEBI" id="CHEBI:57540"/>
    </ligand>
</feature>
<feature type="binding site" evidence="1">
    <location>
        <begin position="97"/>
        <end position="98"/>
    </location>
    <ligand>
        <name>NAD(+)</name>
        <dbReference type="ChEBI" id="CHEBI:57540"/>
    </ligand>
</feature>
<feature type="binding site" evidence="1">
    <location>
        <position position="134"/>
    </location>
    <ligand>
        <name>NAD(+)</name>
        <dbReference type="ChEBI" id="CHEBI:57540"/>
    </ligand>
</feature>
<feature type="binding site" evidence="1">
    <location>
        <position position="157"/>
    </location>
    <ligand>
        <name>NAD(+)</name>
        <dbReference type="ChEBI" id="CHEBI:57540"/>
    </ligand>
</feature>
<feature type="binding site" evidence="1">
    <location>
        <position position="193"/>
    </location>
    <ligand>
        <name>NAD(+)</name>
        <dbReference type="ChEBI" id="CHEBI:57540"/>
    </ligand>
</feature>
<feature type="binding site" evidence="1">
    <location>
        <position position="320"/>
    </location>
    <ligand>
        <name>NAD(+)</name>
        <dbReference type="ChEBI" id="CHEBI:57540"/>
    </ligand>
</feature>
<feature type="binding site" evidence="1">
    <location>
        <position position="344"/>
    </location>
    <ligand>
        <name>NAD(+)</name>
        <dbReference type="ChEBI" id="CHEBI:57540"/>
    </ligand>
</feature>
<feature type="binding site" evidence="1">
    <location>
        <position position="438"/>
    </location>
    <ligand>
        <name>Zn(2+)</name>
        <dbReference type="ChEBI" id="CHEBI:29105"/>
    </ligand>
</feature>
<feature type="binding site" evidence="1">
    <location>
        <position position="441"/>
    </location>
    <ligand>
        <name>Zn(2+)</name>
        <dbReference type="ChEBI" id="CHEBI:29105"/>
    </ligand>
</feature>
<feature type="binding site" evidence="1">
    <location>
        <position position="456"/>
    </location>
    <ligand>
        <name>Zn(2+)</name>
        <dbReference type="ChEBI" id="CHEBI:29105"/>
    </ligand>
</feature>
<feature type="binding site" evidence="1">
    <location>
        <position position="462"/>
    </location>
    <ligand>
        <name>Zn(2+)</name>
        <dbReference type="ChEBI" id="CHEBI:29105"/>
    </ligand>
</feature>
<protein>
    <recommendedName>
        <fullName evidence="1">DNA ligase</fullName>
        <ecNumber evidence="1">6.5.1.2</ecNumber>
    </recommendedName>
    <alternativeName>
        <fullName evidence="1">Polydeoxyribonucleotide synthase [NAD(+)]</fullName>
    </alternativeName>
</protein>
<accession>A1VN98</accession>
<gene>
    <name evidence="1" type="primary">ligA</name>
    <name type="ordered locus">Pnap_1816</name>
</gene>